<gene>
    <name evidence="1" type="primary">nagB</name>
    <name type="ordered locus">SaurJH9_0592</name>
</gene>
<organism>
    <name type="scientific">Staphylococcus aureus (strain JH9)</name>
    <dbReference type="NCBI Taxonomy" id="359786"/>
    <lineage>
        <taxon>Bacteria</taxon>
        <taxon>Bacillati</taxon>
        <taxon>Bacillota</taxon>
        <taxon>Bacilli</taxon>
        <taxon>Bacillales</taxon>
        <taxon>Staphylococcaceae</taxon>
        <taxon>Staphylococcus</taxon>
    </lineage>
</organism>
<reference key="1">
    <citation type="submission" date="2007-05" db="EMBL/GenBank/DDBJ databases">
        <title>Complete sequence of chromosome of Staphylococcus aureus subsp. aureus JH9.</title>
        <authorList>
            <consortium name="US DOE Joint Genome Institute"/>
            <person name="Copeland A."/>
            <person name="Lucas S."/>
            <person name="Lapidus A."/>
            <person name="Barry K."/>
            <person name="Detter J.C."/>
            <person name="Glavina del Rio T."/>
            <person name="Hammon N."/>
            <person name="Israni S."/>
            <person name="Pitluck S."/>
            <person name="Chain P."/>
            <person name="Malfatti S."/>
            <person name="Shin M."/>
            <person name="Vergez L."/>
            <person name="Schmutz J."/>
            <person name="Larimer F."/>
            <person name="Land M."/>
            <person name="Hauser L."/>
            <person name="Kyrpides N."/>
            <person name="Kim E."/>
            <person name="Tomasz A."/>
            <person name="Richardson P."/>
        </authorList>
    </citation>
    <scope>NUCLEOTIDE SEQUENCE [LARGE SCALE GENOMIC DNA]</scope>
    <source>
        <strain>JH9</strain>
    </source>
</reference>
<dbReference type="EC" id="3.5.99.6" evidence="1"/>
<dbReference type="EMBL" id="CP000703">
    <property type="protein sequence ID" value="ABQ48396.1"/>
    <property type="molecule type" value="Genomic_DNA"/>
</dbReference>
<dbReference type="RefSeq" id="WP_000866415.1">
    <property type="nucleotide sequence ID" value="NC_009487.1"/>
</dbReference>
<dbReference type="SMR" id="A5IQC3"/>
<dbReference type="KEGG" id="saj:SaurJH9_0592"/>
<dbReference type="HOGENOM" id="CLU_049611_1_1_9"/>
<dbReference type="UniPathway" id="UPA00629">
    <property type="reaction ID" value="UER00684"/>
</dbReference>
<dbReference type="GO" id="GO:0005737">
    <property type="term" value="C:cytoplasm"/>
    <property type="evidence" value="ECO:0007669"/>
    <property type="project" value="TreeGrafter"/>
</dbReference>
<dbReference type="GO" id="GO:0004342">
    <property type="term" value="F:glucosamine-6-phosphate deaminase activity"/>
    <property type="evidence" value="ECO:0007669"/>
    <property type="project" value="UniProtKB-UniRule"/>
</dbReference>
<dbReference type="GO" id="GO:0042802">
    <property type="term" value="F:identical protein binding"/>
    <property type="evidence" value="ECO:0007669"/>
    <property type="project" value="TreeGrafter"/>
</dbReference>
<dbReference type="GO" id="GO:0005975">
    <property type="term" value="P:carbohydrate metabolic process"/>
    <property type="evidence" value="ECO:0007669"/>
    <property type="project" value="InterPro"/>
</dbReference>
<dbReference type="GO" id="GO:0006043">
    <property type="term" value="P:glucosamine catabolic process"/>
    <property type="evidence" value="ECO:0007669"/>
    <property type="project" value="TreeGrafter"/>
</dbReference>
<dbReference type="GO" id="GO:0006046">
    <property type="term" value="P:N-acetylglucosamine catabolic process"/>
    <property type="evidence" value="ECO:0007669"/>
    <property type="project" value="TreeGrafter"/>
</dbReference>
<dbReference type="GO" id="GO:0019262">
    <property type="term" value="P:N-acetylneuraminate catabolic process"/>
    <property type="evidence" value="ECO:0007669"/>
    <property type="project" value="UniProtKB-UniRule"/>
</dbReference>
<dbReference type="CDD" id="cd01399">
    <property type="entry name" value="GlcN6P_deaminase"/>
    <property type="match status" value="1"/>
</dbReference>
<dbReference type="FunFam" id="3.40.50.1360:FF:000003">
    <property type="entry name" value="Glucosamine-6-phosphate deaminase"/>
    <property type="match status" value="1"/>
</dbReference>
<dbReference type="Gene3D" id="3.40.50.1360">
    <property type="match status" value="1"/>
</dbReference>
<dbReference type="HAMAP" id="MF_01241">
    <property type="entry name" value="GlcN6P_deamin"/>
    <property type="match status" value="1"/>
</dbReference>
<dbReference type="InterPro" id="IPR006148">
    <property type="entry name" value="Glc/Gal-6P_isomerase"/>
</dbReference>
<dbReference type="InterPro" id="IPR004547">
    <property type="entry name" value="Glucosamine6P_isomerase"/>
</dbReference>
<dbReference type="InterPro" id="IPR018321">
    <property type="entry name" value="Glucosamine6P_isomerase_CS"/>
</dbReference>
<dbReference type="InterPro" id="IPR037171">
    <property type="entry name" value="NagB/RpiA_transferase-like"/>
</dbReference>
<dbReference type="NCBIfam" id="TIGR00502">
    <property type="entry name" value="nagB"/>
    <property type="match status" value="1"/>
</dbReference>
<dbReference type="PANTHER" id="PTHR11280">
    <property type="entry name" value="GLUCOSAMINE-6-PHOSPHATE ISOMERASE"/>
    <property type="match status" value="1"/>
</dbReference>
<dbReference type="PANTHER" id="PTHR11280:SF5">
    <property type="entry name" value="GLUCOSAMINE-6-PHOSPHATE ISOMERASE"/>
    <property type="match status" value="1"/>
</dbReference>
<dbReference type="Pfam" id="PF01182">
    <property type="entry name" value="Glucosamine_iso"/>
    <property type="match status" value="1"/>
</dbReference>
<dbReference type="SUPFAM" id="SSF100950">
    <property type="entry name" value="NagB/RpiA/CoA transferase-like"/>
    <property type="match status" value="1"/>
</dbReference>
<dbReference type="PROSITE" id="PS01161">
    <property type="entry name" value="GLC_GALNAC_ISOMERASE"/>
    <property type="match status" value="1"/>
</dbReference>
<feature type="chain" id="PRO_1000085757" description="Glucosamine-6-phosphate deaminase">
    <location>
        <begin position="1"/>
        <end position="252"/>
    </location>
</feature>
<feature type="active site" description="Proton acceptor; for enolization step" evidence="1">
    <location>
        <position position="67"/>
    </location>
</feature>
<feature type="active site" description="For ring-opening step" evidence="1">
    <location>
        <position position="137"/>
    </location>
</feature>
<feature type="active site" description="Proton acceptor; for ring-opening step" evidence="1">
    <location>
        <position position="139"/>
    </location>
</feature>
<feature type="active site" description="For ring-opening step" evidence="1">
    <location>
        <position position="144"/>
    </location>
</feature>
<comment type="function">
    <text evidence="1">Catalyzes the reversible isomerization-deamination of glucosamine 6-phosphate (GlcN6P) to form fructose 6-phosphate (Fru6P) and ammonium ion.</text>
</comment>
<comment type="catalytic activity">
    <reaction evidence="1">
        <text>alpha-D-glucosamine 6-phosphate + H2O = beta-D-fructose 6-phosphate + NH4(+)</text>
        <dbReference type="Rhea" id="RHEA:12172"/>
        <dbReference type="ChEBI" id="CHEBI:15377"/>
        <dbReference type="ChEBI" id="CHEBI:28938"/>
        <dbReference type="ChEBI" id="CHEBI:57634"/>
        <dbReference type="ChEBI" id="CHEBI:75989"/>
        <dbReference type="EC" id="3.5.99.6"/>
    </reaction>
</comment>
<comment type="pathway">
    <text evidence="1">Amino-sugar metabolism; N-acetylneuraminate degradation; D-fructose 6-phosphate from N-acetylneuraminate: step 5/5.</text>
</comment>
<comment type="similarity">
    <text evidence="1">Belongs to the glucosamine/galactosamine-6-phosphate isomerase family. NagB subfamily.</text>
</comment>
<evidence type="ECO:0000255" key="1">
    <source>
        <dbReference type="HAMAP-Rule" id="MF_01241"/>
    </source>
</evidence>
<protein>
    <recommendedName>
        <fullName evidence="1">Glucosamine-6-phosphate deaminase</fullName>
        <ecNumber evidence="1">3.5.99.6</ecNumber>
    </recommendedName>
    <alternativeName>
        <fullName evidence="1">GlcN6P deaminase</fullName>
        <shortName evidence="1">GNPDA</shortName>
    </alternativeName>
    <alternativeName>
        <fullName evidence="1">Glucosamine-6-phosphate isomerase</fullName>
    </alternativeName>
</protein>
<sequence length="252" mass="28467">MKVLNLGSKKQASFYVACELYKEMAFNQHCKLGLATGGTMTDLYEQLVKLLNKNQLNVDNVSTFNLDEYVGLTASHPQSYHYYMDDMLFKQYPYFNRKNIHIPNGDADDMNAEASKYNDVLEQQGQRDIQILGIGENGHIGFNEPGTPFDSVTHIVDLTESTIKANSRYFKNEDDVPKQAISMGLANILQAKRIILLAFGEKKRAAITHLLNQEISVDVPATLLHKHPNVEIYLDDEACPKNVAKIHVDEMD</sequence>
<name>NAGB_STAA9</name>
<accession>A5IQC3</accession>
<proteinExistence type="inferred from homology"/>
<keyword id="KW-0119">Carbohydrate metabolism</keyword>
<keyword id="KW-0378">Hydrolase</keyword>